<dbReference type="EC" id="1.17.99.9" evidence="1"/>
<dbReference type="EMBL" id="CP000683">
    <property type="protein sequence ID" value="ABV84605.1"/>
    <property type="status" value="ALT_INIT"/>
    <property type="molecule type" value="Genomic_DNA"/>
</dbReference>
<dbReference type="RefSeq" id="WP_041404564.1">
    <property type="nucleotide sequence ID" value="NC_009900.1"/>
</dbReference>
<dbReference type="SMR" id="A8F119"/>
<dbReference type="KEGG" id="rms:RMA_0350"/>
<dbReference type="HOGENOM" id="CLU_017627_0_0_5"/>
<dbReference type="UniPathway" id="UPA00269">
    <property type="reaction ID" value="UER00713"/>
</dbReference>
<dbReference type="Proteomes" id="UP000001311">
    <property type="component" value="Chromosome"/>
</dbReference>
<dbReference type="GO" id="GO:0005886">
    <property type="term" value="C:plasma membrane"/>
    <property type="evidence" value="ECO:0007669"/>
    <property type="project" value="UniProtKB-SubCell"/>
</dbReference>
<dbReference type="GO" id="GO:0046872">
    <property type="term" value="F:metal ion binding"/>
    <property type="evidence" value="ECO:0007669"/>
    <property type="project" value="UniProtKB-KW"/>
</dbReference>
<dbReference type="GO" id="GO:0016653">
    <property type="term" value="F:oxidoreductase activity, acting on NAD(P)H, heme protein as acceptor"/>
    <property type="evidence" value="ECO:0007669"/>
    <property type="project" value="InterPro"/>
</dbReference>
<dbReference type="GO" id="GO:0006784">
    <property type="term" value="P:heme A biosynthetic process"/>
    <property type="evidence" value="ECO:0007669"/>
    <property type="project" value="UniProtKB-UniRule"/>
</dbReference>
<dbReference type="HAMAP" id="MF_01665">
    <property type="entry name" value="HemeA_synth_type2"/>
    <property type="match status" value="1"/>
</dbReference>
<dbReference type="InterPro" id="IPR003780">
    <property type="entry name" value="COX15/CtaA_fam"/>
</dbReference>
<dbReference type="InterPro" id="IPR023754">
    <property type="entry name" value="HemeA_Synthase_type2"/>
</dbReference>
<dbReference type="PANTHER" id="PTHR23289">
    <property type="entry name" value="CYTOCHROME C OXIDASE ASSEMBLY PROTEIN COX15"/>
    <property type="match status" value="1"/>
</dbReference>
<dbReference type="PANTHER" id="PTHR23289:SF2">
    <property type="entry name" value="CYTOCHROME C OXIDASE ASSEMBLY PROTEIN COX15 HOMOLOG"/>
    <property type="match status" value="1"/>
</dbReference>
<dbReference type="Pfam" id="PF02628">
    <property type="entry name" value="COX15-CtaA"/>
    <property type="match status" value="1"/>
</dbReference>
<name>CTAA_RICM5</name>
<gene>
    <name evidence="1" type="primary">ctaA</name>
    <name type="synonym">coxW</name>
    <name type="ordered locus">RMA_0350</name>
</gene>
<reference key="1">
    <citation type="journal article" date="2007" name="Genome Res.">
        <title>Lateral gene transfer between obligate intracellular bacteria: evidence from the Rickettsia massiliae genome.</title>
        <authorList>
            <person name="Blanc G."/>
            <person name="Ogata H."/>
            <person name="Robert C."/>
            <person name="Audic S."/>
            <person name="Claverie J.-M."/>
            <person name="Raoult D."/>
        </authorList>
    </citation>
    <scope>NUCLEOTIDE SEQUENCE [LARGE SCALE GENOMIC DNA]</scope>
    <source>
        <strain>Mtu5</strain>
    </source>
</reference>
<keyword id="KW-1003">Cell membrane</keyword>
<keyword id="KW-0350">Heme biosynthesis</keyword>
<keyword id="KW-0408">Iron</keyword>
<keyword id="KW-0472">Membrane</keyword>
<keyword id="KW-0479">Metal-binding</keyword>
<keyword id="KW-0560">Oxidoreductase</keyword>
<keyword id="KW-0812">Transmembrane</keyword>
<keyword id="KW-1133">Transmembrane helix</keyword>
<organism>
    <name type="scientific">Rickettsia massiliae (strain Mtu5)</name>
    <dbReference type="NCBI Taxonomy" id="416276"/>
    <lineage>
        <taxon>Bacteria</taxon>
        <taxon>Pseudomonadati</taxon>
        <taxon>Pseudomonadota</taxon>
        <taxon>Alphaproteobacteria</taxon>
        <taxon>Rickettsiales</taxon>
        <taxon>Rickettsiaceae</taxon>
        <taxon>Rickettsieae</taxon>
        <taxon>Rickettsia</taxon>
        <taxon>spotted fever group</taxon>
    </lineage>
</organism>
<evidence type="ECO:0000255" key="1">
    <source>
        <dbReference type="HAMAP-Rule" id="MF_01665"/>
    </source>
</evidence>
<evidence type="ECO:0000305" key="2"/>
<feature type="chain" id="PRO_0000349077" description="Heme A synthase">
    <location>
        <begin position="1"/>
        <end position="337"/>
    </location>
</feature>
<feature type="transmembrane region" description="Helical" evidence="1">
    <location>
        <begin position="6"/>
        <end position="26"/>
    </location>
</feature>
<feature type="transmembrane region" description="Helical" evidence="1">
    <location>
        <begin position="87"/>
        <end position="107"/>
    </location>
</feature>
<feature type="transmembrane region" description="Helical" evidence="1">
    <location>
        <begin position="119"/>
        <end position="139"/>
    </location>
</feature>
<feature type="transmembrane region" description="Helical" evidence="1">
    <location>
        <begin position="154"/>
        <end position="174"/>
    </location>
</feature>
<feature type="transmembrane region" description="Helical" evidence="1">
    <location>
        <begin position="192"/>
        <end position="212"/>
    </location>
</feature>
<feature type="transmembrane region" description="Helical" evidence="1">
    <location>
        <begin position="258"/>
        <end position="278"/>
    </location>
</feature>
<feature type="transmembrane region" description="Helical" evidence="1">
    <location>
        <begin position="285"/>
        <end position="305"/>
    </location>
</feature>
<feature type="transmembrane region" description="Helical" evidence="1">
    <location>
        <begin position="308"/>
        <end position="328"/>
    </location>
</feature>
<feature type="binding site" description="axial binding residue" evidence="1">
    <location>
        <position position="256"/>
    </location>
    <ligand>
        <name>heme</name>
        <dbReference type="ChEBI" id="CHEBI:30413"/>
    </ligand>
    <ligandPart>
        <name>Fe</name>
        <dbReference type="ChEBI" id="CHEBI:18248"/>
    </ligandPart>
</feature>
<feature type="binding site" description="axial binding residue" evidence="1">
    <location>
        <position position="316"/>
    </location>
    <ligand>
        <name>heme</name>
        <dbReference type="ChEBI" id="CHEBI:30413"/>
    </ligand>
    <ligandPart>
        <name>Fe</name>
        <dbReference type="ChEBI" id="CHEBI:18248"/>
    </ligandPart>
</feature>
<sequence>MQKSLITKWLCISCIMVIATIVIGGITRLTGSGLSIVEWRPVTGILPPFSFESWQAEFAKYKAFPEYNSVNYGITLSQFKFIYLLEFIHRLLGRITALIYIVPLIYFYFKDVIKNRDMLPYIIALWLFCVQGFMGWYMVKSGLLNSPYVSHCRLAFHLIIAVIIYHILFYQLIKNRCDILLIPSQTDLKLPLIFSGIAITVVYVQIFLGALVAGLDAGLIYNSFPLMDYSFIPMEIKDNFFDLKNWYDPVFIQFIHRLGGYSVFLVVVVLIICLLKIEHPKLNKIAYFLMIALLMQVSTGIITLLYSVPIIIASIHQLFAVILLSIIIWCCFLIKSS</sequence>
<accession>A8F119</accession>
<protein>
    <recommendedName>
        <fullName evidence="1">Heme A synthase</fullName>
        <shortName evidence="1">HAS</shortName>
        <ecNumber evidence="1">1.17.99.9</ecNumber>
    </recommendedName>
    <alternativeName>
        <fullName evidence="1">Cytochrome aa3-controlling protein</fullName>
    </alternativeName>
</protein>
<proteinExistence type="inferred from homology"/>
<comment type="function">
    <text evidence="1">Catalyzes the conversion of heme O to heme A by two successive hydroxylations of the methyl group at C8. The first hydroxylation forms heme I, the second hydroxylation results in an unstable dihydroxymethyl group, which spontaneously dehydrates, resulting in the formyl group of heme A.</text>
</comment>
<comment type="catalytic activity">
    <reaction evidence="1">
        <text>Fe(II)-heme o + 2 A + H2O = Fe(II)-heme a + 2 AH2</text>
        <dbReference type="Rhea" id="RHEA:63388"/>
        <dbReference type="ChEBI" id="CHEBI:13193"/>
        <dbReference type="ChEBI" id="CHEBI:15377"/>
        <dbReference type="ChEBI" id="CHEBI:17499"/>
        <dbReference type="ChEBI" id="CHEBI:60530"/>
        <dbReference type="ChEBI" id="CHEBI:61715"/>
        <dbReference type="EC" id="1.17.99.9"/>
    </reaction>
    <physiologicalReaction direction="left-to-right" evidence="1">
        <dbReference type="Rhea" id="RHEA:63389"/>
    </physiologicalReaction>
</comment>
<comment type="cofactor">
    <cofactor evidence="1">
        <name>heme b</name>
        <dbReference type="ChEBI" id="CHEBI:60344"/>
    </cofactor>
</comment>
<comment type="pathway">
    <text evidence="1">Porphyrin-containing compound metabolism; heme A biosynthesis; heme A from heme O: step 1/1.</text>
</comment>
<comment type="subunit">
    <text evidence="1">Interacts with CtaB.</text>
</comment>
<comment type="subcellular location">
    <subcellularLocation>
        <location evidence="1">Cell membrane</location>
        <topology evidence="1">Multi-pass membrane protein</topology>
    </subcellularLocation>
</comment>
<comment type="similarity">
    <text evidence="1">Belongs to the COX15/CtaA family. Type 2 subfamily.</text>
</comment>
<comment type="sequence caution" evidence="2">
    <conflict type="erroneous initiation">
        <sequence resource="EMBL-CDS" id="ABV84605"/>
    </conflict>
</comment>